<accession>B1IUD4</accession>
<gene>
    <name evidence="1" type="primary">mnmA</name>
    <name type="ordered locus">EcolC_2470</name>
</gene>
<keyword id="KW-0067">ATP-binding</keyword>
<keyword id="KW-0963">Cytoplasm</keyword>
<keyword id="KW-1015">Disulfide bond</keyword>
<keyword id="KW-0547">Nucleotide-binding</keyword>
<keyword id="KW-0694">RNA-binding</keyword>
<keyword id="KW-0808">Transferase</keyword>
<keyword id="KW-0819">tRNA processing</keyword>
<keyword id="KW-0820">tRNA-binding</keyword>
<protein>
    <recommendedName>
        <fullName evidence="1">tRNA-specific 2-thiouridylase MnmA</fullName>
        <ecNumber evidence="1">2.8.1.13</ecNumber>
    </recommendedName>
</protein>
<dbReference type="EC" id="2.8.1.13" evidence="1"/>
<dbReference type="EMBL" id="CP000946">
    <property type="protein sequence ID" value="ACA78101.1"/>
    <property type="molecule type" value="Genomic_DNA"/>
</dbReference>
<dbReference type="RefSeq" id="WP_001297484.1">
    <property type="nucleotide sequence ID" value="NZ_MTFT01000032.1"/>
</dbReference>
<dbReference type="SMR" id="B1IUD4"/>
<dbReference type="GeneID" id="75203719"/>
<dbReference type="KEGG" id="ecl:EcolC_2470"/>
<dbReference type="HOGENOM" id="CLU_035188_1_0_6"/>
<dbReference type="GO" id="GO:0005737">
    <property type="term" value="C:cytoplasm"/>
    <property type="evidence" value="ECO:0007669"/>
    <property type="project" value="UniProtKB-SubCell"/>
</dbReference>
<dbReference type="GO" id="GO:0005524">
    <property type="term" value="F:ATP binding"/>
    <property type="evidence" value="ECO:0007669"/>
    <property type="project" value="UniProtKB-KW"/>
</dbReference>
<dbReference type="GO" id="GO:0000049">
    <property type="term" value="F:tRNA binding"/>
    <property type="evidence" value="ECO:0007669"/>
    <property type="project" value="UniProtKB-KW"/>
</dbReference>
<dbReference type="GO" id="GO:0103016">
    <property type="term" value="F:tRNA-uridine 2-sulfurtransferase activity"/>
    <property type="evidence" value="ECO:0007669"/>
    <property type="project" value="UniProtKB-EC"/>
</dbReference>
<dbReference type="GO" id="GO:0002143">
    <property type="term" value="P:tRNA wobble position uridine thiolation"/>
    <property type="evidence" value="ECO:0007669"/>
    <property type="project" value="TreeGrafter"/>
</dbReference>
<dbReference type="CDD" id="cd01998">
    <property type="entry name" value="MnmA_TRMU-like"/>
    <property type="match status" value="1"/>
</dbReference>
<dbReference type="FunFam" id="2.30.30.280:FF:000001">
    <property type="entry name" value="tRNA-specific 2-thiouridylase MnmA"/>
    <property type="match status" value="1"/>
</dbReference>
<dbReference type="FunFam" id="2.40.30.10:FF:000023">
    <property type="entry name" value="tRNA-specific 2-thiouridylase MnmA"/>
    <property type="match status" value="1"/>
</dbReference>
<dbReference type="FunFam" id="3.40.50.620:FF:000004">
    <property type="entry name" value="tRNA-specific 2-thiouridylase MnmA"/>
    <property type="match status" value="1"/>
</dbReference>
<dbReference type="Gene3D" id="2.30.30.280">
    <property type="entry name" value="Adenine nucleotide alpha hydrolases-like domains"/>
    <property type="match status" value="1"/>
</dbReference>
<dbReference type="Gene3D" id="3.40.50.620">
    <property type="entry name" value="HUPs"/>
    <property type="match status" value="1"/>
</dbReference>
<dbReference type="Gene3D" id="2.40.30.10">
    <property type="entry name" value="Translation factors"/>
    <property type="match status" value="1"/>
</dbReference>
<dbReference type="HAMAP" id="MF_00144">
    <property type="entry name" value="tRNA_thiouridyl_MnmA"/>
    <property type="match status" value="1"/>
</dbReference>
<dbReference type="InterPro" id="IPR004506">
    <property type="entry name" value="MnmA-like"/>
</dbReference>
<dbReference type="InterPro" id="IPR046885">
    <property type="entry name" value="MnmA-like_C"/>
</dbReference>
<dbReference type="InterPro" id="IPR046884">
    <property type="entry name" value="MnmA-like_central"/>
</dbReference>
<dbReference type="InterPro" id="IPR023382">
    <property type="entry name" value="MnmA-like_central_sf"/>
</dbReference>
<dbReference type="InterPro" id="IPR014729">
    <property type="entry name" value="Rossmann-like_a/b/a_fold"/>
</dbReference>
<dbReference type="NCBIfam" id="NF001138">
    <property type="entry name" value="PRK00143.1"/>
    <property type="match status" value="1"/>
</dbReference>
<dbReference type="NCBIfam" id="TIGR00420">
    <property type="entry name" value="trmU"/>
    <property type="match status" value="1"/>
</dbReference>
<dbReference type="PANTHER" id="PTHR11933:SF5">
    <property type="entry name" value="MITOCHONDRIAL TRNA-SPECIFIC 2-THIOURIDYLASE 1"/>
    <property type="match status" value="1"/>
</dbReference>
<dbReference type="PANTHER" id="PTHR11933">
    <property type="entry name" value="TRNA 5-METHYLAMINOMETHYL-2-THIOURIDYLATE -METHYLTRANSFERASE"/>
    <property type="match status" value="1"/>
</dbReference>
<dbReference type="Pfam" id="PF03054">
    <property type="entry name" value="tRNA_Me_trans"/>
    <property type="match status" value="1"/>
</dbReference>
<dbReference type="Pfam" id="PF20258">
    <property type="entry name" value="tRNA_Me_trans_C"/>
    <property type="match status" value="1"/>
</dbReference>
<dbReference type="Pfam" id="PF20259">
    <property type="entry name" value="tRNA_Me_trans_M"/>
    <property type="match status" value="1"/>
</dbReference>
<dbReference type="SUPFAM" id="SSF52402">
    <property type="entry name" value="Adenine nucleotide alpha hydrolases-like"/>
    <property type="match status" value="1"/>
</dbReference>
<name>MNMA_ECOLC</name>
<organism>
    <name type="scientific">Escherichia coli (strain ATCC 8739 / DSM 1576 / NBRC 3972 / NCIMB 8545 / WDCM 00012 / Crooks)</name>
    <dbReference type="NCBI Taxonomy" id="481805"/>
    <lineage>
        <taxon>Bacteria</taxon>
        <taxon>Pseudomonadati</taxon>
        <taxon>Pseudomonadota</taxon>
        <taxon>Gammaproteobacteria</taxon>
        <taxon>Enterobacterales</taxon>
        <taxon>Enterobacteriaceae</taxon>
        <taxon>Escherichia</taxon>
    </lineage>
</organism>
<sequence length="368" mass="40959">MSETAKKVIVGMSGGVDSSVSAWLLQQQGYQVEGLFMKNWEEDDGEEYCTAAADLADAQAVCDKLGIELHTVNFAAEYWDNVFELFLAEYKAGRTPNPDILCNKEIKFKAFLEFAAEDLGADYIATGHYVRRADVDGKSRLLRGLDSNKDQSYFLYTLSHEQIAQSLFPVGELEKPQVRKIAEDLGLVTAKKKDSTGICFIGERKFREFLGRYLPAQPGKIITVDGDEIGEHQGLMYHTLGQRKGLGIGGTKEGTEEPWYVVDKDVENNILVVAQGHEHPRLMSVGLIAQQLHWVDREPFTGTMRCTVKTRYRQTDIPCTVKALDDDRIEVIFDEPVAAVTPGQSAVFYNGEVCLGGGIIEQRLPLPV</sequence>
<reference key="1">
    <citation type="submission" date="2008-02" db="EMBL/GenBank/DDBJ databases">
        <title>Complete sequence of Escherichia coli C str. ATCC 8739.</title>
        <authorList>
            <person name="Copeland A."/>
            <person name="Lucas S."/>
            <person name="Lapidus A."/>
            <person name="Glavina del Rio T."/>
            <person name="Dalin E."/>
            <person name="Tice H."/>
            <person name="Bruce D."/>
            <person name="Goodwin L."/>
            <person name="Pitluck S."/>
            <person name="Kiss H."/>
            <person name="Brettin T."/>
            <person name="Detter J.C."/>
            <person name="Han C."/>
            <person name="Kuske C.R."/>
            <person name="Schmutz J."/>
            <person name="Larimer F."/>
            <person name="Land M."/>
            <person name="Hauser L."/>
            <person name="Kyrpides N."/>
            <person name="Mikhailova N."/>
            <person name="Ingram L."/>
            <person name="Richardson P."/>
        </authorList>
    </citation>
    <scope>NUCLEOTIDE SEQUENCE [LARGE SCALE GENOMIC DNA]</scope>
    <source>
        <strain>ATCC 8739 / DSM 1576 / NBRC 3972 / NCIMB 8545 / WDCM 00012 / Crooks</strain>
    </source>
</reference>
<proteinExistence type="inferred from homology"/>
<feature type="chain" id="PRO_0000349626" description="tRNA-specific 2-thiouridylase MnmA">
    <location>
        <begin position="1"/>
        <end position="368"/>
    </location>
</feature>
<feature type="region of interest" description="Interaction with target base in tRNA" evidence="1">
    <location>
        <begin position="97"/>
        <end position="99"/>
    </location>
</feature>
<feature type="region of interest" description="Interaction with tRNA" evidence="1">
    <location>
        <begin position="149"/>
        <end position="151"/>
    </location>
</feature>
<feature type="region of interest" description="Interaction with tRNA" evidence="1">
    <location>
        <begin position="311"/>
        <end position="312"/>
    </location>
</feature>
<feature type="active site" description="Nucleophile" evidence="1">
    <location>
        <position position="102"/>
    </location>
</feature>
<feature type="active site" description="Cysteine persulfide intermediate" evidence="1">
    <location>
        <position position="199"/>
    </location>
</feature>
<feature type="binding site" evidence="1">
    <location>
        <begin position="11"/>
        <end position="18"/>
    </location>
    <ligand>
        <name>ATP</name>
        <dbReference type="ChEBI" id="CHEBI:30616"/>
    </ligand>
</feature>
<feature type="binding site" evidence="1">
    <location>
        <position position="37"/>
    </location>
    <ligand>
        <name>ATP</name>
        <dbReference type="ChEBI" id="CHEBI:30616"/>
    </ligand>
</feature>
<feature type="binding site" evidence="1">
    <location>
        <position position="127"/>
    </location>
    <ligand>
        <name>ATP</name>
        <dbReference type="ChEBI" id="CHEBI:30616"/>
    </ligand>
</feature>
<feature type="site" description="Interaction with tRNA" evidence="1">
    <location>
        <position position="128"/>
    </location>
</feature>
<feature type="site" description="Interaction with tRNA" evidence="1">
    <location>
        <position position="344"/>
    </location>
</feature>
<feature type="disulfide bond" description="Alternate" evidence="1">
    <location>
        <begin position="102"/>
        <end position="199"/>
    </location>
</feature>
<evidence type="ECO:0000255" key="1">
    <source>
        <dbReference type="HAMAP-Rule" id="MF_00144"/>
    </source>
</evidence>
<comment type="function">
    <text evidence="1">Catalyzes the 2-thiolation of uridine at the wobble position (U34) of tRNA(Lys), tRNA(Glu) and tRNA(Gln), leading to the formation of s(2)U34, the first step of tRNA-mnm(5)s(2)U34 synthesis. Sulfur is provided by IscS, via a sulfur-relay system. Binds ATP and its substrate tRNAs.</text>
</comment>
<comment type="catalytic activity">
    <reaction evidence="1">
        <text>S-sulfanyl-L-cysteinyl-[protein] + uridine(34) in tRNA + AH2 + ATP = 2-thiouridine(34) in tRNA + L-cysteinyl-[protein] + A + AMP + diphosphate + H(+)</text>
        <dbReference type="Rhea" id="RHEA:47032"/>
        <dbReference type="Rhea" id="RHEA-COMP:10131"/>
        <dbReference type="Rhea" id="RHEA-COMP:11726"/>
        <dbReference type="Rhea" id="RHEA-COMP:11727"/>
        <dbReference type="Rhea" id="RHEA-COMP:11728"/>
        <dbReference type="ChEBI" id="CHEBI:13193"/>
        <dbReference type="ChEBI" id="CHEBI:15378"/>
        <dbReference type="ChEBI" id="CHEBI:17499"/>
        <dbReference type="ChEBI" id="CHEBI:29950"/>
        <dbReference type="ChEBI" id="CHEBI:30616"/>
        <dbReference type="ChEBI" id="CHEBI:33019"/>
        <dbReference type="ChEBI" id="CHEBI:61963"/>
        <dbReference type="ChEBI" id="CHEBI:65315"/>
        <dbReference type="ChEBI" id="CHEBI:87170"/>
        <dbReference type="ChEBI" id="CHEBI:456215"/>
        <dbReference type="EC" id="2.8.1.13"/>
    </reaction>
</comment>
<comment type="subunit">
    <text evidence="1">Interacts with TusE.</text>
</comment>
<comment type="subcellular location">
    <subcellularLocation>
        <location evidence="1">Cytoplasm</location>
    </subcellularLocation>
</comment>
<comment type="similarity">
    <text evidence="1">Belongs to the MnmA/TRMU family.</text>
</comment>